<sequence>MAYSWQTDPNPNESHEKQYEHQEFLFVNQPHSSSQVSLGFDQIVDEISGKIPHYESEIDENTFFVPTAPKWDSTGHSLNEAHQISLNEFTSKSRELSWHQVSKAPAIGFSPSVLPKPQNTNKECSWGSPIGKHHGADDSRFSILAPSFTSLDKINLEKELENENHNYHIGFESSIPPTNSSFSSDFMPKEENKRSGHVNIVEPSLMLLKGSLQPGMWESTWQKNIESIGCSIQLVEVPQSSNTSLASFCNKVKKIRERYHAADVNFNSGKIWSTTTAFPYQLFSKTKFNIHIFIDNSTQPLHFMPCANYLVKDLIAEILHFCTNDQLLPKDHILSVCGSEEFLQNDHCLGSHKMFQKDKSVIQLHLQKSREAPGKLSRKHEEDHSQFYLNQLLEFMHIWKVSRQCLLTLIRKYDFHLKYLLKTQENVYNIIEEVKKICSVLGCVETKQITDAVNELSLILQRKGENFYQSSETSAKGLIEKVTTELSTSIYQLINVYCNSFYADFQPVNVPRCTSYLNPGLPSHLSFTVYAAHNIPETWVHSYKAFSFTCWLTYAGKKLCQVRNYRNIPDKKLFFFLVNWNETINFPLEIKSLPRESMLTVKLFGIACATNNANLLAWTCLPLFPKEKSILGSMLFSMTLQSEPPVEMITPGVWDVSQPSPVTLQIDFPATGWEYMKPDSEENRSNLEEPLKECIKHIARLSQKQTPLLLSEEKKRYLWFYRFYCNNENCSLPLVLGSAPGWDERTVSEMHTILRRWTFSQPLEALGLLTSSFPDQEIRKVAVQQLDNLLNDELLEYLPQLVQAVKFEWNLESPLVQLLLHRSLQSIQVAHRLYWLLKNAENEAYFKSWYQKLLAALQFCAGKALNDEFSKEQKLIKILGDIGERVKSASDHQRQEVLKKEIGRLEEFFQDVNTCHLPLNPALCIKGIDHDACSYFTSNALPLKITFINANPMGKNISIIFKAGDDLRQDMLVLQLIQVMDNIWLQEGLDMQMIIYRCLSTGKDQGLVQMVPDAVTLAKIHRHSGLIGPLKENTIKKWFSQHNHLKADYEKALRNFFYSCAGWCVVTFILGVCDRHNDNIMLTKSGHMFHIDFGKFLGHAQTFGGIKRDRAPFIFTSEMEYFITEGGKNPQHFQDFVELCCRAYNIIRKHSQLLLNLLEMMLYAGLPELSGIQDLKYVYNNLRPQDTDLEATSHFTKKIKESLECFPVKLNNLIHTLAQMSAISPAKSTSQTFPQESCLLSTTRSIERATILGFSKKSSNLYLIQVTHSNNETSLTEKSFEQFSKLHSQLQKQFASLTLPEFPHWWHLPFTNSDHRRFRDLNHYMEQILNVSHEVTNSDCVLSFFLSEAVQQTVEESSPVYLGEKFPDKKPKVQLVISYEDVKLTILVKHMKNIHLPDGSAPSAHVEFYLLPYPSEVRRRKTKSVPKCTDPTYNEIVVYDEVTELQGHVLMLIVKSKTVFVGAINIRLCSVPLDKEKWYPLGNSII</sequence>
<accession>O75747</accession>
<accession>A1L3U0</accession>
<accession>F5H369</accession>
<protein>
    <recommendedName>
        <fullName evidence="13">Phosphatidylinositol 3-kinase C2 domain-containing subunit gamma</fullName>
        <shortName>PI3K-C2-gamma</shortName>
        <shortName>PtdIns-3-kinase C2 subunit gamma</shortName>
        <ecNumber evidence="2">2.7.1.137</ecNumber>
        <ecNumber evidence="2">2.7.1.154</ecNumber>
    </recommendedName>
    <alternativeName>
        <fullName>Phosphoinositide 3-kinase-C2-gamma</fullName>
    </alternativeName>
</protein>
<dbReference type="EC" id="2.7.1.137" evidence="2"/>
<dbReference type="EC" id="2.7.1.154" evidence="2"/>
<dbReference type="EMBL" id="AJ000008">
    <property type="protein sequence ID" value="CAA03853.1"/>
    <property type="status" value="ALT_SEQ"/>
    <property type="molecule type" value="mRNA"/>
</dbReference>
<dbReference type="EMBL" id="AC087236">
    <property type="status" value="NOT_ANNOTATED_CDS"/>
    <property type="molecule type" value="Genomic_DNA"/>
</dbReference>
<dbReference type="EMBL" id="AC087240">
    <property type="status" value="NOT_ANNOTATED_CDS"/>
    <property type="molecule type" value="Genomic_DNA"/>
</dbReference>
<dbReference type="EMBL" id="AC091815">
    <property type="status" value="NOT_ANNOTATED_CDS"/>
    <property type="molecule type" value="Genomic_DNA"/>
</dbReference>
<dbReference type="EMBL" id="AC092851">
    <property type="status" value="NOT_ANNOTATED_CDS"/>
    <property type="molecule type" value="Genomic_DNA"/>
</dbReference>
<dbReference type="EMBL" id="KF455618">
    <property type="status" value="NOT_ANNOTATED_CDS"/>
    <property type="molecule type" value="Genomic_DNA"/>
</dbReference>
<dbReference type="EMBL" id="CH471094">
    <property type="protein sequence ID" value="EAW96387.1"/>
    <property type="molecule type" value="Genomic_DNA"/>
</dbReference>
<dbReference type="EMBL" id="BC130277">
    <property type="protein sequence ID" value="AAI30278.1"/>
    <property type="molecule type" value="mRNA"/>
</dbReference>
<dbReference type="CCDS" id="CCDS44839.1">
    <molecule id="O75747-2"/>
</dbReference>
<dbReference type="CCDS" id="CCDS73452.1">
    <molecule id="O75747-1"/>
</dbReference>
<dbReference type="PIR" id="PC4347">
    <property type="entry name" value="PC4347"/>
</dbReference>
<dbReference type="RefSeq" id="NP_001275701.1">
    <molecule id="O75747-1"/>
    <property type="nucleotide sequence ID" value="NM_001288772.2"/>
</dbReference>
<dbReference type="RefSeq" id="NP_001275703.1">
    <property type="nucleotide sequence ID" value="NM_001288774.1"/>
</dbReference>
<dbReference type="RefSeq" id="NP_004561.3">
    <molecule id="O75747-2"/>
    <property type="nucleotide sequence ID" value="NM_004570.6"/>
</dbReference>
<dbReference type="RefSeq" id="XP_047284961.1">
    <molecule id="O75747-1"/>
    <property type="nucleotide sequence ID" value="XM_047429005.1"/>
</dbReference>
<dbReference type="RefSeq" id="XP_047284962.1">
    <molecule id="O75747-1"/>
    <property type="nucleotide sequence ID" value="XM_047429006.1"/>
</dbReference>
<dbReference type="RefSeq" id="XP_047284965.1">
    <molecule id="O75747-2"/>
    <property type="nucleotide sequence ID" value="XM_047429009.1"/>
</dbReference>
<dbReference type="PDB" id="2WWE">
    <property type="method" value="X-ray"/>
    <property type="resolution" value="1.25 A"/>
    <property type="chains" value="A=1245-1348"/>
</dbReference>
<dbReference type="PDBsum" id="2WWE"/>
<dbReference type="SMR" id="O75747"/>
<dbReference type="BioGRID" id="111306">
    <property type="interactions" value="3"/>
</dbReference>
<dbReference type="FunCoup" id="O75747">
    <property type="interactions" value="128"/>
</dbReference>
<dbReference type="STRING" id="9606.ENSP00000445381"/>
<dbReference type="BindingDB" id="O75747"/>
<dbReference type="ChEMBL" id="CHEMBL1163120"/>
<dbReference type="DrugBank" id="DB12010">
    <property type="generic name" value="Fostamatinib"/>
</dbReference>
<dbReference type="DrugCentral" id="O75747"/>
<dbReference type="GuidetoPHARMACOLOGY" id="2288"/>
<dbReference type="GlyGen" id="O75747">
    <property type="glycosylation" value="1 site, 1 O-linked glycan (1 site)"/>
</dbReference>
<dbReference type="iPTMnet" id="O75747"/>
<dbReference type="PhosphoSitePlus" id="O75747"/>
<dbReference type="BioMuta" id="PIK3C2G"/>
<dbReference type="jPOST" id="O75747"/>
<dbReference type="MassIVE" id="O75747"/>
<dbReference type="PaxDb" id="9606-ENSP00000445381"/>
<dbReference type="PeptideAtlas" id="O75747"/>
<dbReference type="ProteomicsDB" id="26180"/>
<dbReference type="ProteomicsDB" id="50178"/>
<dbReference type="Antibodypedia" id="23850">
    <property type="antibodies" value="121 antibodies from 30 providers"/>
</dbReference>
<dbReference type="DNASU" id="5288"/>
<dbReference type="Ensembl" id="ENST00000433979.6">
    <molecule id="O75747-2"/>
    <property type="protein sequence ID" value="ENSP00000404845.1"/>
    <property type="gene ID" value="ENSG00000139144.11"/>
</dbReference>
<dbReference type="Ensembl" id="ENST00000538779.6">
    <molecule id="O75747-1"/>
    <property type="protein sequence ID" value="ENSP00000445381.1"/>
    <property type="gene ID" value="ENSG00000139144.11"/>
</dbReference>
<dbReference type="Ensembl" id="ENST00000675017.1">
    <molecule id="O75747-1"/>
    <property type="protein sequence ID" value="ENSP00000501889.1"/>
    <property type="gene ID" value="ENSG00000139144.11"/>
</dbReference>
<dbReference type="Ensembl" id="ENST00000676171.1">
    <molecule id="O75747-1"/>
    <property type="protein sequence ID" value="ENSP00000501770.1"/>
    <property type="gene ID" value="ENSG00000139144.11"/>
</dbReference>
<dbReference type="GeneID" id="5288"/>
<dbReference type="KEGG" id="hsa:5288"/>
<dbReference type="MANE-Select" id="ENST00000538779.6">
    <property type="protein sequence ID" value="ENSP00000445381.1"/>
    <property type="RefSeq nucleotide sequence ID" value="NM_001288772.2"/>
    <property type="RefSeq protein sequence ID" value="NP_001275701.1"/>
</dbReference>
<dbReference type="UCSC" id="uc001rdt.4">
    <molecule id="O75747-1"/>
    <property type="organism name" value="human"/>
</dbReference>
<dbReference type="AGR" id="HGNC:8973"/>
<dbReference type="CTD" id="5288"/>
<dbReference type="DisGeNET" id="5288"/>
<dbReference type="GeneCards" id="PIK3C2G"/>
<dbReference type="HGNC" id="HGNC:8973">
    <property type="gene designation" value="PIK3C2G"/>
</dbReference>
<dbReference type="HPA" id="ENSG00000139144">
    <property type="expression patterns" value="Tissue enhanced (epididymis, stomach)"/>
</dbReference>
<dbReference type="MalaCards" id="PIK3C2G"/>
<dbReference type="MIM" id="609001">
    <property type="type" value="gene"/>
</dbReference>
<dbReference type="neXtProt" id="NX_O75747"/>
<dbReference type="OpenTargets" id="ENSG00000139144"/>
<dbReference type="PharmGKB" id="PA33306"/>
<dbReference type="VEuPathDB" id="HostDB:ENSG00000139144"/>
<dbReference type="eggNOG" id="KOG0905">
    <property type="taxonomic scope" value="Eukaryota"/>
</dbReference>
<dbReference type="GeneTree" id="ENSGT00940000159982"/>
<dbReference type="HOGENOM" id="CLU_002191_2_0_1"/>
<dbReference type="InParanoid" id="O75747"/>
<dbReference type="OMA" id="FTPGRKM"/>
<dbReference type="OrthoDB" id="67688at2759"/>
<dbReference type="PAN-GO" id="O75747">
    <property type="GO annotations" value="8 GO annotations based on evolutionary models"/>
</dbReference>
<dbReference type="PhylomeDB" id="O75747"/>
<dbReference type="TreeFam" id="TF102031"/>
<dbReference type="BioCyc" id="MetaCyc:HS06583-MONOMER"/>
<dbReference type="BRENDA" id="2.7.1.137">
    <property type="organism ID" value="2681"/>
</dbReference>
<dbReference type="BRENDA" id="2.7.1.154">
    <property type="organism ID" value="2681"/>
</dbReference>
<dbReference type="PathwayCommons" id="O75747"/>
<dbReference type="Reactome" id="R-HSA-1660499">
    <property type="pathway name" value="Synthesis of PIPs at the plasma membrane"/>
</dbReference>
<dbReference type="Reactome" id="R-HSA-1660514">
    <property type="pathway name" value="Synthesis of PIPs at the Golgi membrane"/>
</dbReference>
<dbReference type="BioGRID-ORCS" id="5288">
    <property type="hits" value="11 hits in 1158 CRISPR screens"/>
</dbReference>
<dbReference type="ChiTaRS" id="PIK3C2G">
    <property type="organism name" value="human"/>
</dbReference>
<dbReference type="EvolutionaryTrace" id="O75747"/>
<dbReference type="GeneWiki" id="PIK3C2G"/>
<dbReference type="GenomeRNAi" id="5288"/>
<dbReference type="Pharos" id="O75747">
    <property type="development level" value="Tchem"/>
</dbReference>
<dbReference type="PRO" id="PR:O75747"/>
<dbReference type="Proteomes" id="UP000005640">
    <property type="component" value="Chromosome 12"/>
</dbReference>
<dbReference type="RNAct" id="O75747">
    <property type="molecule type" value="protein"/>
</dbReference>
<dbReference type="Bgee" id="ENSG00000139144">
    <property type="expression patterns" value="Expressed in corpus epididymis and 114 other cell types or tissues"/>
</dbReference>
<dbReference type="ExpressionAtlas" id="O75747">
    <property type="expression patterns" value="baseline and differential"/>
</dbReference>
<dbReference type="GO" id="GO:0005737">
    <property type="term" value="C:cytoplasm"/>
    <property type="evidence" value="ECO:0000318"/>
    <property type="project" value="GO_Central"/>
</dbReference>
<dbReference type="GO" id="GO:0005829">
    <property type="term" value="C:cytosol"/>
    <property type="evidence" value="ECO:0000304"/>
    <property type="project" value="Reactome"/>
</dbReference>
<dbReference type="GO" id="GO:0016020">
    <property type="term" value="C:membrane"/>
    <property type="evidence" value="ECO:0000250"/>
    <property type="project" value="UniProtKB"/>
</dbReference>
<dbReference type="GO" id="GO:0005886">
    <property type="term" value="C:plasma membrane"/>
    <property type="evidence" value="ECO:0000318"/>
    <property type="project" value="GO_Central"/>
</dbReference>
<dbReference type="GO" id="GO:0016303">
    <property type="term" value="F:1-phosphatidylinositol-3-kinase activity"/>
    <property type="evidence" value="ECO:0000250"/>
    <property type="project" value="UniProtKB"/>
</dbReference>
<dbReference type="GO" id="GO:0035005">
    <property type="term" value="F:1-phosphatidylinositol-4-phosphate 3-kinase activity"/>
    <property type="evidence" value="ECO:0000250"/>
    <property type="project" value="UniProtKB"/>
</dbReference>
<dbReference type="GO" id="GO:0005524">
    <property type="term" value="F:ATP binding"/>
    <property type="evidence" value="ECO:0007669"/>
    <property type="project" value="UniProtKB-KW"/>
</dbReference>
<dbReference type="GO" id="GO:0035091">
    <property type="term" value="F:phosphatidylinositol binding"/>
    <property type="evidence" value="ECO:0007669"/>
    <property type="project" value="InterPro"/>
</dbReference>
<dbReference type="GO" id="GO:0052742">
    <property type="term" value="F:phosphatidylinositol kinase activity"/>
    <property type="evidence" value="ECO:0000303"/>
    <property type="project" value="UniProtKB"/>
</dbReference>
<dbReference type="GO" id="GO:0016477">
    <property type="term" value="P:cell migration"/>
    <property type="evidence" value="ECO:0000318"/>
    <property type="project" value="GO_Central"/>
</dbReference>
<dbReference type="GO" id="GO:0006935">
    <property type="term" value="P:chemotaxis"/>
    <property type="evidence" value="ECO:0007669"/>
    <property type="project" value="UniProtKB-KW"/>
</dbReference>
<dbReference type="GO" id="GO:0044788">
    <property type="term" value="P:modulation by host of viral process"/>
    <property type="evidence" value="ECO:0000315"/>
    <property type="project" value="ParkinsonsUK-UCL"/>
</dbReference>
<dbReference type="GO" id="GO:0043491">
    <property type="term" value="P:phosphatidylinositol 3-kinase/protein kinase B signal transduction"/>
    <property type="evidence" value="ECO:0000318"/>
    <property type="project" value="GO_Central"/>
</dbReference>
<dbReference type="GO" id="GO:0036092">
    <property type="term" value="P:phosphatidylinositol-3-phosphate biosynthetic process"/>
    <property type="evidence" value="ECO:0000250"/>
    <property type="project" value="UniProtKB"/>
</dbReference>
<dbReference type="GO" id="GO:0048015">
    <property type="term" value="P:phosphatidylinositol-mediated signaling"/>
    <property type="evidence" value="ECO:0000318"/>
    <property type="project" value="GO_Central"/>
</dbReference>
<dbReference type="CDD" id="cd04012">
    <property type="entry name" value="C2A_PI3K_class_II"/>
    <property type="match status" value="1"/>
</dbReference>
<dbReference type="CDD" id="cd08381">
    <property type="entry name" value="C2B_PI3K_class_II"/>
    <property type="match status" value="1"/>
</dbReference>
<dbReference type="CDD" id="cd00869">
    <property type="entry name" value="PI3Ka_II"/>
    <property type="match status" value="1"/>
</dbReference>
<dbReference type="CDD" id="cd05177">
    <property type="entry name" value="PI3Kc_C2_gamma"/>
    <property type="match status" value="1"/>
</dbReference>
<dbReference type="CDD" id="cd06896">
    <property type="entry name" value="PX_PI3K_C2_gamma"/>
    <property type="match status" value="1"/>
</dbReference>
<dbReference type="FunFam" id="3.30.1010.10:FF:000001">
    <property type="entry name" value="Phosphatidylinositol 4-phosphate 3-kinase C2 domain-containing subunit beta"/>
    <property type="match status" value="1"/>
</dbReference>
<dbReference type="FunFam" id="1.10.1070.11:FF:000013">
    <property type="entry name" value="Phosphatidylinositol 4-phosphate 3-kinase C2 domain-containing subunit gamma"/>
    <property type="match status" value="1"/>
</dbReference>
<dbReference type="FunFam" id="1.25.40.70:FF:000010">
    <property type="entry name" value="Phosphatidylinositol 4-phosphate 3-kinase C2 domain-containing subunit gamma"/>
    <property type="match status" value="1"/>
</dbReference>
<dbReference type="FunFam" id="3.10.20.90:FF:000260">
    <property type="entry name" value="Phosphatidylinositol 4-phosphate 3-kinase C2 domain-containing subunit gamma"/>
    <property type="match status" value="1"/>
</dbReference>
<dbReference type="FunFam" id="3.30.1520.10:FF:000026">
    <property type="entry name" value="Phosphatidylinositol 4-phosphate 3-kinase C2 domain-containing subunit gamma"/>
    <property type="match status" value="1"/>
</dbReference>
<dbReference type="FunFam" id="2.60.40.150:FF:000160">
    <property type="entry name" value="phosphatidylinositol 4-phosphate 3-kinase C2 domain-containing subunit gamma isoform X1"/>
    <property type="match status" value="1"/>
</dbReference>
<dbReference type="FunFam" id="2.60.40.150:FF:000125">
    <property type="entry name" value="Phosphatidylinositol-4-phosphate 3-kinase catalytic subunit type 2 gamma"/>
    <property type="match status" value="1"/>
</dbReference>
<dbReference type="Gene3D" id="2.60.40.150">
    <property type="entry name" value="C2 domain"/>
    <property type="match status" value="2"/>
</dbReference>
<dbReference type="Gene3D" id="1.10.1070.11">
    <property type="entry name" value="Phosphatidylinositol 3-/4-kinase, catalytic domain"/>
    <property type="match status" value="1"/>
</dbReference>
<dbReference type="Gene3D" id="3.10.20.90">
    <property type="entry name" value="Phosphatidylinositol 3-kinase Catalytic Subunit, Chain A, domain 1"/>
    <property type="match status" value="1"/>
</dbReference>
<dbReference type="Gene3D" id="3.30.1010.10">
    <property type="entry name" value="Phosphatidylinositol 3-kinase Catalytic Subunit, Chain A, domain 4"/>
    <property type="match status" value="1"/>
</dbReference>
<dbReference type="Gene3D" id="1.25.40.70">
    <property type="entry name" value="Phosphatidylinositol 3-kinase, accessory domain (PIK)"/>
    <property type="match status" value="1"/>
</dbReference>
<dbReference type="Gene3D" id="3.30.1520.10">
    <property type="entry name" value="Phox-like domain"/>
    <property type="match status" value="1"/>
</dbReference>
<dbReference type="InterPro" id="IPR016024">
    <property type="entry name" value="ARM-type_fold"/>
</dbReference>
<dbReference type="InterPro" id="IPR000008">
    <property type="entry name" value="C2_dom"/>
</dbReference>
<dbReference type="InterPro" id="IPR035892">
    <property type="entry name" value="C2_domain_sf"/>
</dbReference>
<dbReference type="InterPro" id="IPR011009">
    <property type="entry name" value="Kinase-like_dom_sf"/>
</dbReference>
<dbReference type="InterPro" id="IPR000403">
    <property type="entry name" value="PI3/4_kinase_cat_dom"/>
</dbReference>
<dbReference type="InterPro" id="IPR036940">
    <property type="entry name" value="PI3/4_kinase_cat_sf"/>
</dbReference>
<dbReference type="InterPro" id="IPR018936">
    <property type="entry name" value="PI3/4_kinase_CS"/>
</dbReference>
<dbReference type="InterPro" id="IPR037707">
    <property type="entry name" value="PI3K-C2-gamma_dom"/>
</dbReference>
<dbReference type="InterPro" id="IPR002420">
    <property type="entry name" value="PI3K-type_C2_dom"/>
</dbReference>
<dbReference type="InterPro" id="IPR001263">
    <property type="entry name" value="PI3K_accessory_dom"/>
</dbReference>
<dbReference type="InterPro" id="IPR042236">
    <property type="entry name" value="PI3K_accessory_sf"/>
</dbReference>
<dbReference type="InterPro" id="IPR000341">
    <property type="entry name" value="PI3K_Ras-bd_dom"/>
</dbReference>
<dbReference type="InterPro" id="IPR015433">
    <property type="entry name" value="PI_Kinase"/>
</dbReference>
<dbReference type="InterPro" id="IPR001683">
    <property type="entry name" value="PX_dom"/>
</dbReference>
<dbReference type="InterPro" id="IPR036871">
    <property type="entry name" value="PX_dom_sf"/>
</dbReference>
<dbReference type="InterPro" id="IPR029071">
    <property type="entry name" value="Ubiquitin-like_domsf"/>
</dbReference>
<dbReference type="PANTHER" id="PTHR10048:SF29">
    <property type="entry name" value="PHOSPHATIDYLINOSITOL 3-KINASE C2 DOMAIN-CONTAINING SUBUNIT GAMMA"/>
    <property type="match status" value="1"/>
</dbReference>
<dbReference type="PANTHER" id="PTHR10048">
    <property type="entry name" value="PHOSPHATIDYLINOSITOL KINASE"/>
    <property type="match status" value="1"/>
</dbReference>
<dbReference type="Pfam" id="PF00168">
    <property type="entry name" value="C2"/>
    <property type="match status" value="1"/>
</dbReference>
<dbReference type="Pfam" id="PF00454">
    <property type="entry name" value="PI3_PI4_kinase"/>
    <property type="match status" value="1"/>
</dbReference>
<dbReference type="Pfam" id="PF00792">
    <property type="entry name" value="PI3K_C2"/>
    <property type="match status" value="1"/>
</dbReference>
<dbReference type="Pfam" id="PF00794">
    <property type="entry name" value="PI3K_rbd"/>
    <property type="match status" value="1"/>
</dbReference>
<dbReference type="Pfam" id="PF00613">
    <property type="entry name" value="PI3Ka"/>
    <property type="match status" value="1"/>
</dbReference>
<dbReference type="Pfam" id="PF00787">
    <property type="entry name" value="PX"/>
    <property type="match status" value="1"/>
</dbReference>
<dbReference type="SMART" id="SM00239">
    <property type="entry name" value="C2"/>
    <property type="match status" value="1"/>
</dbReference>
<dbReference type="SMART" id="SM00142">
    <property type="entry name" value="PI3K_C2"/>
    <property type="match status" value="1"/>
</dbReference>
<dbReference type="SMART" id="SM00145">
    <property type="entry name" value="PI3Ka"/>
    <property type="match status" value="1"/>
</dbReference>
<dbReference type="SMART" id="SM00146">
    <property type="entry name" value="PI3Kc"/>
    <property type="match status" value="1"/>
</dbReference>
<dbReference type="SMART" id="SM00312">
    <property type="entry name" value="PX"/>
    <property type="match status" value="1"/>
</dbReference>
<dbReference type="SUPFAM" id="SSF48371">
    <property type="entry name" value="ARM repeat"/>
    <property type="match status" value="1"/>
</dbReference>
<dbReference type="SUPFAM" id="SSF49562">
    <property type="entry name" value="C2 domain (Calcium/lipid-binding domain, CaLB)"/>
    <property type="match status" value="2"/>
</dbReference>
<dbReference type="SUPFAM" id="SSF56112">
    <property type="entry name" value="Protein kinase-like (PK-like)"/>
    <property type="match status" value="1"/>
</dbReference>
<dbReference type="SUPFAM" id="SSF64268">
    <property type="entry name" value="PX domain"/>
    <property type="match status" value="1"/>
</dbReference>
<dbReference type="SUPFAM" id="SSF54236">
    <property type="entry name" value="Ubiquitin-like"/>
    <property type="match status" value="1"/>
</dbReference>
<dbReference type="PROSITE" id="PS50004">
    <property type="entry name" value="C2"/>
    <property type="match status" value="1"/>
</dbReference>
<dbReference type="PROSITE" id="PS51547">
    <property type="entry name" value="C2_PI3K"/>
    <property type="match status" value="1"/>
</dbReference>
<dbReference type="PROSITE" id="PS00915">
    <property type="entry name" value="PI3_4_KINASE_1"/>
    <property type="match status" value="1"/>
</dbReference>
<dbReference type="PROSITE" id="PS00916">
    <property type="entry name" value="PI3_4_KINASE_2"/>
    <property type="match status" value="1"/>
</dbReference>
<dbReference type="PROSITE" id="PS50290">
    <property type="entry name" value="PI3_4_KINASE_3"/>
    <property type="match status" value="1"/>
</dbReference>
<dbReference type="PROSITE" id="PS51546">
    <property type="entry name" value="PI3K_RBD"/>
    <property type="match status" value="1"/>
</dbReference>
<dbReference type="PROSITE" id="PS51545">
    <property type="entry name" value="PIK_HELICAL"/>
    <property type="match status" value="1"/>
</dbReference>
<dbReference type="PROSITE" id="PS50195">
    <property type="entry name" value="PX"/>
    <property type="match status" value="1"/>
</dbReference>
<gene>
    <name type="primary">PIK3C2G</name>
</gene>
<name>P3C2G_HUMAN</name>
<reference key="1">
    <citation type="journal article" date="1998" name="Genomics">
        <title>cDNA cloning of a third human C2-domain-containing class II phosphoinositide 3-kinase, PI3K-C2gamma, and chromosomal assignment of this gene (PIK3C2G) to 12p12.</title>
        <authorList>
            <person name="Rozycka M."/>
            <person name="Lu Y.-J."/>
            <person name="Brown R.A."/>
            <person name="Lau M.R."/>
            <person name="Shipley J.M."/>
            <person name="Fry M.J."/>
        </authorList>
    </citation>
    <scope>NUCLEOTIDE SEQUENCE [MRNA] (ISOFORM 2)</scope>
    <scope>TISSUE SPECIFICITY</scope>
    <scope>VARIANT LEU-952</scope>
    <source>
        <tissue>Liver</tissue>
        <tissue>Mammary gland</tissue>
        <tissue>Prostate</tissue>
    </source>
</reference>
<reference key="2">
    <citation type="journal article" date="2006" name="Nature">
        <title>The finished DNA sequence of human chromosome 12.</title>
        <authorList>
            <person name="Scherer S.E."/>
            <person name="Muzny D.M."/>
            <person name="Buhay C.J."/>
            <person name="Chen R."/>
            <person name="Cree A."/>
            <person name="Ding Y."/>
            <person name="Dugan-Rocha S."/>
            <person name="Gill R."/>
            <person name="Gunaratne P."/>
            <person name="Harris R.A."/>
            <person name="Hawes A.C."/>
            <person name="Hernandez J."/>
            <person name="Hodgson A.V."/>
            <person name="Hume J."/>
            <person name="Jackson A."/>
            <person name="Khan Z.M."/>
            <person name="Kovar-Smith C."/>
            <person name="Lewis L.R."/>
            <person name="Lozado R.J."/>
            <person name="Metzker M.L."/>
            <person name="Milosavljevic A."/>
            <person name="Miner G.R."/>
            <person name="Montgomery K.T."/>
            <person name="Morgan M.B."/>
            <person name="Nazareth L.V."/>
            <person name="Scott G."/>
            <person name="Sodergren E."/>
            <person name="Song X.-Z."/>
            <person name="Steffen D."/>
            <person name="Lovering R.C."/>
            <person name="Wheeler D.A."/>
            <person name="Worley K.C."/>
            <person name="Yuan Y."/>
            <person name="Zhang Z."/>
            <person name="Adams C.Q."/>
            <person name="Ansari-Lari M.A."/>
            <person name="Ayele M."/>
            <person name="Brown M.J."/>
            <person name="Chen G."/>
            <person name="Chen Z."/>
            <person name="Clerc-Blankenburg K.P."/>
            <person name="Davis C."/>
            <person name="Delgado O."/>
            <person name="Dinh H.H."/>
            <person name="Draper H."/>
            <person name="Gonzalez-Garay M.L."/>
            <person name="Havlak P."/>
            <person name="Jackson L.R."/>
            <person name="Jacob L.S."/>
            <person name="Kelly S.H."/>
            <person name="Li L."/>
            <person name="Li Z."/>
            <person name="Liu J."/>
            <person name="Liu W."/>
            <person name="Lu J."/>
            <person name="Maheshwari M."/>
            <person name="Nguyen B.-V."/>
            <person name="Okwuonu G.O."/>
            <person name="Pasternak S."/>
            <person name="Perez L.M."/>
            <person name="Plopper F.J.H."/>
            <person name="Santibanez J."/>
            <person name="Shen H."/>
            <person name="Tabor P.E."/>
            <person name="Verduzco D."/>
            <person name="Waldron L."/>
            <person name="Wang Q."/>
            <person name="Williams G.A."/>
            <person name="Zhang J."/>
            <person name="Zhou J."/>
            <person name="Allen C.C."/>
            <person name="Amin A.G."/>
            <person name="Anyalebechi V."/>
            <person name="Bailey M."/>
            <person name="Barbaria J.A."/>
            <person name="Bimage K.E."/>
            <person name="Bryant N.P."/>
            <person name="Burch P.E."/>
            <person name="Burkett C.E."/>
            <person name="Burrell K.L."/>
            <person name="Calderon E."/>
            <person name="Cardenas V."/>
            <person name="Carter K."/>
            <person name="Casias K."/>
            <person name="Cavazos I."/>
            <person name="Cavazos S.R."/>
            <person name="Ceasar H."/>
            <person name="Chacko J."/>
            <person name="Chan S.N."/>
            <person name="Chavez D."/>
            <person name="Christopoulos C."/>
            <person name="Chu J."/>
            <person name="Cockrell R."/>
            <person name="Cox C.D."/>
            <person name="Dang M."/>
            <person name="Dathorne S.R."/>
            <person name="David R."/>
            <person name="Davis C.M."/>
            <person name="Davy-Carroll L."/>
            <person name="Deshazo D.R."/>
            <person name="Donlin J.E."/>
            <person name="D'Souza L."/>
            <person name="Eaves K.A."/>
            <person name="Egan A."/>
            <person name="Emery-Cohen A.J."/>
            <person name="Escotto M."/>
            <person name="Flagg N."/>
            <person name="Forbes L.D."/>
            <person name="Gabisi A.M."/>
            <person name="Garza M."/>
            <person name="Hamilton C."/>
            <person name="Henderson N."/>
            <person name="Hernandez O."/>
            <person name="Hines S."/>
            <person name="Hogues M.E."/>
            <person name="Huang M."/>
            <person name="Idlebird D.G."/>
            <person name="Johnson R."/>
            <person name="Jolivet A."/>
            <person name="Jones S."/>
            <person name="Kagan R."/>
            <person name="King L.M."/>
            <person name="Leal B."/>
            <person name="Lebow H."/>
            <person name="Lee S."/>
            <person name="LeVan J.M."/>
            <person name="Lewis L.C."/>
            <person name="London P."/>
            <person name="Lorensuhewa L.M."/>
            <person name="Loulseged H."/>
            <person name="Lovett D.A."/>
            <person name="Lucier A."/>
            <person name="Lucier R.L."/>
            <person name="Ma J."/>
            <person name="Madu R.C."/>
            <person name="Mapua P."/>
            <person name="Martindale A.D."/>
            <person name="Martinez E."/>
            <person name="Massey E."/>
            <person name="Mawhiney S."/>
            <person name="Meador M.G."/>
            <person name="Mendez S."/>
            <person name="Mercado C."/>
            <person name="Mercado I.C."/>
            <person name="Merritt C.E."/>
            <person name="Miner Z.L."/>
            <person name="Minja E."/>
            <person name="Mitchell T."/>
            <person name="Mohabbat F."/>
            <person name="Mohabbat K."/>
            <person name="Montgomery B."/>
            <person name="Moore N."/>
            <person name="Morris S."/>
            <person name="Munidasa M."/>
            <person name="Ngo R.N."/>
            <person name="Nguyen N.B."/>
            <person name="Nickerson E."/>
            <person name="Nwaokelemeh O.O."/>
            <person name="Nwokenkwo S."/>
            <person name="Obregon M."/>
            <person name="Oguh M."/>
            <person name="Oragunye N."/>
            <person name="Oviedo R.J."/>
            <person name="Parish B.J."/>
            <person name="Parker D.N."/>
            <person name="Parrish J."/>
            <person name="Parks K.L."/>
            <person name="Paul H.A."/>
            <person name="Payton B.A."/>
            <person name="Perez A."/>
            <person name="Perrin W."/>
            <person name="Pickens A."/>
            <person name="Primus E.L."/>
            <person name="Pu L.-L."/>
            <person name="Puazo M."/>
            <person name="Quiles M.M."/>
            <person name="Quiroz J.B."/>
            <person name="Rabata D."/>
            <person name="Reeves K."/>
            <person name="Ruiz S.J."/>
            <person name="Shao H."/>
            <person name="Sisson I."/>
            <person name="Sonaike T."/>
            <person name="Sorelle R.P."/>
            <person name="Sutton A.E."/>
            <person name="Svatek A.F."/>
            <person name="Svetz L.A."/>
            <person name="Tamerisa K.S."/>
            <person name="Taylor T.R."/>
            <person name="Teague B."/>
            <person name="Thomas N."/>
            <person name="Thorn R.D."/>
            <person name="Trejos Z.Y."/>
            <person name="Trevino B.K."/>
            <person name="Ukegbu O.N."/>
            <person name="Urban J.B."/>
            <person name="Vasquez L.I."/>
            <person name="Vera V.A."/>
            <person name="Villasana D.M."/>
            <person name="Wang L."/>
            <person name="Ward-Moore S."/>
            <person name="Warren J.T."/>
            <person name="Wei X."/>
            <person name="White F."/>
            <person name="Williamson A.L."/>
            <person name="Wleczyk R."/>
            <person name="Wooden H.S."/>
            <person name="Wooden S.H."/>
            <person name="Yen J."/>
            <person name="Yoon L."/>
            <person name="Yoon V."/>
            <person name="Zorrilla S.E."/>
            <person name="Nelson D."/>
            <person name="Kucherlapati R."/>
            <person name="Weinstock G."/>
            <person name="Gibbs R.A."/>
        </authorList>
    </citation>
    <scope>NUCLEOTIDE SEQUENCE [LARGE SCALE GENOMIC DNA]</scope>
</reference>
<reference key="3">
    <citation type="submission" date="2005-07" db="EMBL/GenBank/DDBJ databases">
        <authorList>
            <person name="Mural R.J."/>
            <person name="Istrail S."/>
            <person name="Sutton G.G."/>
            <person name="Florea L."/>
            <person name="Halpern A.L."/>
            <person name="Mobarry C.M."/>
            <person name="Lippert R."/>
            <person name="Walenz B."/>
            <person name="Shatkay H."/>
            <person name="Dew I."/>
            <person name="Miller J.R."/>
            <person name="Flanigan M.J."/>
            <person name="Edwards N.J."/>
            <person name="Bolanos R."/>
            <person name="Fasulo D."/>
            <person name="Halldorsson B.V."/>
            <person name="Hannenhalli S."/>
            <person name="Turner R."/>
            <person name="Yooseph S."/>
            <person name="Lu F."/>
            <person name="Nusskern D.R."/>
            <person name="Shue B.C."/>
            <person name="Zheng X.H."/>
            <person name="Zhong F."/>
            <person name="Delcher A.L."/>
            <person name="Huson D.H."/>
            <person name="Kravitz S.A."/>
            <person name="Mouchard L."/>
            <person name="Reinert K."/>
            <person name="Remington K.A."/>
            <person name="Clark A.G."/>
            <person name="Waterman M.S."/>
            <person name="Eichler E.E."/>
            <person name="Adams M.D."/>
            <person name="Hunkapiller M.W."/>
            <person name="Myers E.W."/>
            <person name="Venter J.C."/>
        </authorList>
    </citation>
    <scope>NUCLEOTIDE SEQUENCE [LARGE SCALE GENOMIC DNA]</scope>
    <scope>VARIANTS LEU-146 AND LEU-952</scope>
</reference>
<reference key="4">
    <citation type="journal article" date="2004" name="Genome Res.">
        <title>The status, quality, and expansion of the NIH full-length cDNA project: the Mammalian Gene Collection (MGC).</title>
        <authorList>
            <consortium name="The MGC Project Team"/>
        </authorList>
    </citation>
    <scope>NUCLEOTIDE SEQUENCE [LARGE SCALE MRNA] (ISOFORM 2)</scope>
    <scope>VARIANTS LEU-146 AND LEU-952</scope>
</reference>
<reference key="5">
    <citation type="journal article" date="2007" name="Electrophoresis">
        <title>Toward a global characterization of the phosphoproteome in prostate cancer cells: identification of phosphoproteins in the LNCaP cell line.</title>
        <authorList>
            <person name="Giorgianni F."/>
            <person name="Zhao Y."/>
            <person name="Desiderio D.M."/>
            <person name="Beranova-Giorgianni S."/>
        </authorList>
    </citation>
    <scope>IDENTIFICATION BY MASS SPECTROMETRY [LARGE SCALE ANALYSIS]</scope>
    <source>
        <tissue>Prostate cancer</tissue>
    </source>
</reference>
<reference key="6">
    <citation type="journal article" date="2008" name="Biochem. Biophys. Res. Commun.">
        <title>Association of the PIK3C2G gene polymorphisms with type 2 DM in a Japanese population.</title>
        <authorList>
            <person name="Daimon M."/>
            <person name="Sato H."/>
            <person name="Oizumi T."/>
            <person name="Toriyama S."/>
            <person name="Saito T."/>
            <person name="Karasawa S."/>
            <person name="Jimbu Y."/>
            <person name="Wada K."/>
            <person name="Kameda W."/>
            <person name="Susa S."/>
            <person name="Yamaguchi H."/>
            <person name="Emi M."/>
            <person name="Muramatsu M."/>
            <person name="Kubota I."/>
            <person name="Kawata S."/>
            <person name="Kato T."/>
        </authorList>
    </citation>
    <scope>VARIANT LEU-146</scope>
</reference>
<reference key="7">
    <citation type="submission" date="2009-11" db="PDB data bank">
        <title>Crystal structure of the phox homology domain of human phosphoinositide-3-kinase-C2-gamma.</title>
        <authorList>
            <consortium name="Structural genomics consortium (SGC)"/>
        </authorList>
    </citation>
    <scope>X-RAY CRYSTALLOGRAPHY (1.25 ANGSTROMS) OF 1245-1348</scope>
</reference>
<proteinExistence type="evidence at protein level"/>
<comment type="function">
    <text evidence="1 2">Generates phosphatidylinositol 3-phosphate (PtdIns3P) and phosphatidylinositol 3,4-bisphosphate (PtdIns(3,4)P2) that act as second messengers (By similarity). May play a role in SDF1A-stimulated chemotaxis (By similarity).</text>
</comment>
<comment type="catalytic activity">
    <reaction evidence="2">
        <text>a 1,2-diacyl-sn-glycero-3-phospho-(1D-myo-inositol 4-phosphate) + ATP = a 1,2-diacyl-sn-glycero-3-phospho-(1D-myo-inositol-3,4-bisphosphate) + ADP + H(+)</text>
        <dbReference type="Rhea" id="RHEA:18373"/>
        <dbReference type="ChEBI" id="CHEBI:15378"/>
        <dbReference type="ChEBI" id="CHEBI:30616"/>
        <dbReference type="ChEBI" id="CHEBI:57658"/>
        <dbReference type="ChEBI" id="CHEBI:58178"/>
        <dbReference type="ChEBI" id="CHEBI:456216"/>
        <dbReference type="EC" id="2.7.1.154"/>
    </reaction>
    <physiologicalReaction direction="left-to-right" evidence="2">
        <dbReference type="Rhea" id="RHEA:18374"/>
    </physiologicalReaction>
</comment>
<comment type="catalytic activity">
    <reaction evidence="2">
        <text>a 1,2-diacyl-sn-glycero-3-phospho-(1D-myo-inositol) + ATP = a 1,2-diacyl-sn-glycero-3-phospho-(1D-myo-inositol-3-phosphate) + ADP + H(+)</text>
        <dbReference type="Rhea" id="RHEA:12709"/>
        <dbReference type="ChEBI" id="CHEBI:15378"/>
        <dbReference type="ChEBI" id="CHEBI:30616"/>
        <dbReference type="ChEBI" id="CHEBI:57880"/>
        <dbReference type="ChEBI" id="CHEBI:58088"/>
        <dbReference type="ChEBI" id="CHEBI:456216"/>
        <dbReference type="EC" id="2.7.1.137"/>
    </reaction>
    <physiologicalReaction direction="left-to-right" evidence="2">
        <dbReference type="Rhea" id="RHEA:12710"/>
    </physiologicalReaction>
</comment>
<comment type="subcellular location">
    <subcellularLocation>
        <location evidence="1">Membrane</location>
        <topology evidence="1">Peripheral membrane protein</topology>
    </subcellularLocation>
</comment>
<comment type="alternative products">
    <event type="alternative splicing"/>
    <isoform>
        <id>O75747-1</id>
        <name>1</name>
        <sequence type="displayed"/>
    </isoform>
    <isoform>
        <id>O75747-2</id>
        <name>2</name>
        <sequence type="described" ref="VSP_062039"/>
    </isoform>
</comment>
<comment type="tissue specificity">
    <text evidence="11">Highly expressed in liver, prostate and testis. Lower levels in small intestine, kidney and pancreas.</text>
</comment>
<comment type="similarity">
    <text evidence="7 8">Belongs to the PI3/PI4-kinase family.</text>
</comment>
<comment type="sequence caution" evidence="13">
    <conflict type="erroneous termination">
        <sequence resource="EMBL-CDS" id="CAA03853"/>
    </conflict>
    <text>Extended C-terminus.</text>
</comment>
<evidence type="ECO:0000250" key="1">
    <source>
        <dbReference type="UniProtKB" id="O70167"/>
    </source>
</evidence>
<evidence type="ECO:0000250" key="2">
    <source>
        <dbReference type="UniProtKB" id="O70173"/>
    </source>
</evidence>
<evidence type="ECO:0000255" key="3">
    <source>
        <dbReference type="PROSITE-ProRule" id="PRU00041"/>
    </source>
</evidence>
<evidence type="ECO:0000255" key="4">
    <source>
        <dbReference type="PROSITE-ProRule" id="PRU00147"/>
    </source>
</evidence>
<evidence type="ECO:0000255" key="5">
    <source>
        <dbReference type="PROSITE-ProRule" id="PRU00269"/>
    </source>
</evidence>
<evidence type="ECO:0000255" key="6">
    <source>
        <dbReference type="PROSITE-ProRule" id="PRU00878"/>
    </source>
</evidence>
<evidence type="ECO:0000255" key="7">
    <source>
        <dbReference type="PROSITE-ProRule" id="PRU00879"/>
    </source>
</evidence>
<evidence type="ECO:0000255" key="8">
    <source>
        <dbReference type="PROSITE-ProRule" id="PRU00880"/>
    </source>
</evidence>
<evidence type="ECO:0000269" key="9">
    <source>
    </source>
</evidence>
<evidence type="ECO:0000269" key="10">
    <source>
    </source>
</evidence>
<evidence type="ECO:0000269" key="11">
    <source>
    </source>
</evidence>
<evidence type="ECO:0000269" key="12">
    <source ref="3"/>
</evidence>
<evidence type="ECO:0000305" key="13"/>
<evidence type="ECO:0007829" key="14">
    <source>
        <dbReference type="PDB" id="2WWE"/>
    </source>
</evidence>
<keyword id="KW-0002">3D-structure</keyword>
<keyword id="KW-0025">Alternative splicing</keyword>
<keyword id="KW-0067">ATP-binding</keyword>
<keyword id="KW-0145">Chemotaxis</keyword>
<keyword id="KW-0418">Kinase</keyword>
<keyword id="KW-0443">Lipid metabolism</keyword>
<keyword id="KW-0472">Membrane</keyword>
<keyword id="KW-0547">Nucleotide-binding</keyword>
<keyword id="KW-1267">Proteomics identification</keyword>
<keyword id="KW-1185">Reference proteome</keyword>
<keyword id="KW-0808">Transferase</keyword>
<organism>
    <name type="scientific">Homo sapiens</name>
    <name type="common">Human</name>
    <dbReference type="NCBI Taxonomy" id="9606"/>
    <lineage>
        <taxon>Eukaryota</taxon>
        <taxon>Metazoa</taxon>
        <taxon>Chordata</taxon>
        <taxon>Craniata</taxon>
        <taxon>Vertebrata</taxon>
        <taxon>Euteleostomi</taxon>
        <taxon>Mammalia</taxon>
        <taxon>Eutheria</taxon>
        <taxon>Euarchontoglires</taxon>
        <taxon>Primates</taxon>
        <taxon>Haplorrhini</taxon>
        <taxon>Catarrhini</taxon>
        <taxon>Hominidae</taxon>
        <taxon>Homo</taxon>
    </lineage>
</organism>
<feature type="chain" id="PRO_0000088799" description="Phosphatidylinositol 3-kinase C2 domain-containing subunit gamma">
    <location>
        <begin position="1"/>
        <end position="1486"/>
    </location>
</feature>
<feature type="domain" description="PI3K-RBD" evidence="7">
    <location>
        <begin position="285"/>
        <end position="371"/>
    </location>
</feature>
<feature type="domain" description="C2 PI3K-type" evidence="8">
    <location>
        <begin position="521"/>
        <end position="669"/>
    </location>
</feature>
<feature type="domain" description="PIK helical" evidence="6">
    <location>
        <begin position="684"/>
        <end position="860"/>
    </location>
</feature>
<feature type="domain" description="PI3K/PI4K catalytic" evidence="5">
    <location>
        <begin position="929"/>
        <end position="1207"/>
    </location>
</feature>
<feature type="domain" description="PX" evidence="4">
    <location>
        <begin position="1240"/>
        <end position="1352"/>
    </location>
</feature>
<feature type="domain" description="C2" evidence="3">
    <location>
        <begin position="1369"/>
        <end position="1486"/>
    </location>
</feature>
<feature type="region of interest" description="G-loop" evidence="5">
    <location>
        <begin position="935"/>
        <end position="941"/>
    </location>
</feature>
<feature type="region of interest" description="Catalytic loop" evidence="5">
    <location>
        <begin position="1071"/>
        <end position="1079"/>
    </location>
</feature>
<feature type="region of interest" description="Activation loop" evidence="5">
    <location>
        <begin position="1090"/>
        <end position="1116"/>
    </location>
</feature>
<feature type="splice variant" id="VSP_062039" description="In isoform 2.">
    <original>SYKAFSFTCWLTYAGKKLCQVRNYRNIPDKKLFFFLVNWNET</original>
    <variation>R</variation>
    <location>
        <begin position="542"/>
        <end position="583"/>
    </location>
</feature>
<feature type="sequence variant" id="VAR_056676" description="In dbSNP:rs11044004." evidence="9 10 12">
    <original>P</original>
    <variation>L</variation>
    <location>
        <position position="146"/>
    </location>
</feature>
<feature type="sequence variant" id="VAR_056677" description="In dbSNP:rs7133666.">
    <original>A</original>
    <variation>E</variation>
    <location>
        <position position="261"/>
    </location>
</feature>
<feature type="sequence variant" id="VAR_060323" description="In dbSNP:rs12312266." evidence="9 11 12">
    <original>P</original>
    <variation>L</variation>
    <location>
        <position position="952"/>
    </location>
</feature>
<feature type="sequence variant" id="VAR_060324" description="In dbSNP:rs12099555.">
    <original>V</original>
    <variation>G</variation>
    <location>
        <position position="1331"/>
    </location>
</feature>
<feature type="sequence variant" id="VAR_060325" description="In dbSNP:rs12816860.">
    <original>N</original>
    <variation>T</variation>
    <location>
        <position position="1483"/>
    </location>
</feature>
<feature type="sequence conflict" description="In Ref. 3; EAW96387 and 4; AAI30278." evidence="13" ref="3 4">
    <location>
        <position position="129"/>
    </location>
</feature>
<feature type="sequence conflict" description="In Ref. 1; CAA03853." evidence="13" ref="1">
    <original>G</original>
    <variation>R</variation>
    <location>
        <position position="1006"/>
    </location>
</feature>
<feature type="sequence conflict" description="In Ref. 1; CAA03853." evidence="13" ref="1">
    <location>
        <position position="1250"/>
    </location>
</feature>
<feature type="sequence conflict" description="In Ref. 1; CAA03853." evidence="13" ref="1">
    <location>
        <position position="1355"/>
    </location>
</feature>
<feature type="sequence conflict" description="In Ref. 1; CAA03853." evidence="13" ref="1">
    <original>E</original>
    <variation>EK</variation>
    <location>
        <position position="1364"/>
    </location>
</feature>
<feature type="sequence conflict" description="In Ref. 1; CAA03853." evidence="13" ref="1">
    <original>R</original>
    <variation>L</variation>
    <location>
        <position position="1418"/>
    </location>
</feature>
<feature type="strand" evidence="14">
    <location>
        <begin position="1243"/>
        <end position="1255"/>
    </location>
</feature>
<feature type="strand" evidence="14">
    <location>
        <begin position="1258"/>
        <end position="1268"/>
    </location>
</feature>
<feature type="strand" evidence="14">
    <location>
        <begin position="1273"/>
        <end position="1278"/>
    </location>
</feature>
<feature type="helix" evidence="14">
    <location>
        <begin position="1280"/>
        <end position="1293"/>
    </location>
</feature>
<feature type="turn" evidence="14">
    <location>
        <begin position="1294"/>
        <end position="1296"/>
    </location>
</feature>
<feature type="helix" evidence="14">
    <location>
        <begin position="1308"/>
        <end position="1312"/>
    </location>
</feature>
<feature type="helix" evidence="14">
    <location>
        <begin position="1314"/>
        <end position="1328"/>
    </location>
</feature>
<feature type="helix" evidence="14">
    <location>
        <begin position="1333"/>
        <end position="1336"/>
    </location>
</feature>
<feature type="helix" evidence="14">
    <location>
        <begin position="1339"/>
        <end position="1346"/>
    </location>
</feature>